<accession>Q54F46</accession>
<accession>O43988</accession>
<reference key="1">
    <citation type="journal article" date="1998" name="Development">
        <title>The homeobox-containing gene Wariai regulates anterior-posterior patterning and cell-type homeostasis in Dictyostelium.</title>
        <authorList>
            <person name="Han Z."/>
            <person name="Firtel R.A."/>
        </authorList>
    </citation>
    <scope>NUCLEOTIDE SEQUENCE [MRNA]</scope>
    <scope>FUNCTION</scope>
    <scope>DEVELOPMENTAL STAGE</scope>
    <scope>DISRUPTION PHENOTYPE</scope>
    <source>
        <strain>AX3</strain>
    </source>
</reference>
<reference key="2">
    <citation type="journal article" date="2005" name="Nature">
        <title>The genome of the social amoeba Dictyostelium discoideum.</title>
        <authorList>
            <person name="Eichinger L."/>
            <person name="Pachebat J.A."/>
            <person name="Gloeckner G."/>
            <person name="Rajandream M.A."/>
            <person name="Sucgang R."/>
            <person name="Berriman M."/>
            <person name="Song J."/>
            <person name="Olsen R."/>
            <person name="Szafranski K."/>
            <person name="Xu Q."/>
            <person name="Tunggal B."/>
            <person name="Kummerfeld S."/>
            <person name="Madera M."/>
            <person name="Konfortov B.A."/>
            <person name="Rivero F."/>
            <person name="Bankier A.T."/>
            <person name="Lehmann R."/>
            <person name="Hamlin N."/>
            <person name="Davies R."/>
            <person name="Gaudet P."/>
            <person name="Fey P."/>
            <person name="Pilcher K."/>
            <person name="Chen G."/>
            <person name="Saunders D."/>
            <person name="Sodergren E.J."/>
            <person name="Davis P."/>
            <person name="Kerhornou A."/>
            <person name="Nie X."/>
            <person name="Hall N."/>
            <person name="Anjard C."/>
            <person name="Hemphill L."/>
            <person name="Bason N."/>
            <person name="Farbrother P."/>
            <person name="Desany B."/>
            <person name="Just E."/>
            <person name="Morio T."/>
            <person name="Rost R."/>
            <person name="Churcher C.M."/>
            <person name="Cooper J."/>
            <person name="Haydock S."/>
            <person name="van Driessche N."/>
            <person name="Cronin A."/>
            <person name="Goodhead I."/>
            <person name="Muzny D.M."/>
            <person name="Mourier T."/>
            <person name="Pain A."/>
            <person name="Lu M."/>
            <person name="Harper D."/>
            <person name="Lindsay R."/>
            <person name="Hauser H."/>
            <person name="James K.D."/>
            <person name="Quiles M."/>
            <person name="Madan Babu M."/>
            <person name="Saito T."/>
            <person name="Buchrieser C."/>
            <person name="Wardroper A."/>
            <person name="Felder M."/>
            <person name="Thangavelu M."/>
            <person name="Johnson D."/>
            <person name="Knights A."/>
            <person name="Loulseged H."/>
            <person name="Mungall K.L."/>
            <person name="Oliver K."/>
            <person name="Price C."/>
            <person name="Quail M.A."/>
            <person name="Urushihara H."/>
            <person name="Hernandez J."/>
            <person name="Rabbinowitsch E."/>
            <person name="Steffen D."/>
            <person name="Sanders M."/>
            <person name="Ma J."/>
            <person name="Kohara Y."/>
            <person name="Sharp S."/>
            <person name="Simmonds M.N."/>
            <person name="Spiegler S."/>
            <person name="Tivey A."/>
            <person name="Sugano S."/>
            <person name="White B."/>
            <person name="Walker D."/>
            <person name="Woodward J.R."/>
            <person name="Winckler T."/>
            <person name="Tanaka Y."/>
            <person name="Shaulsky G."/>
            <person name="Schleicher M."/>
            <person name="Weinstock G.M."/>
            <person name="Rosenthal A."/>
            <person name="Cox E.C."/>
            <person name="Chisholm R.L."/>
            <person name="Gibbs R.A."/>
            <person name="Loomis W.F."/>
            <person name="Platzer M."/>
            <person name="Kay R.R."/>
            <person name="Williams J.G."/>
            <person name="Dear P.H."/>
            <person name="Noegel A.A."/>
            <person name="Barrell B.G."/>
            <person name="Kuspa A."/>
        </authorList>
    </citation>
    <scope>NUCLEOTIDE SEQUENCE [LARGE SCALE GENOMIC DNA]</scope>
    <source>
        <strain>AX4</strain>
    </source>
</reference>
<gene>
    <name type="primary">warA</name>
    <name type="synonym">hbx1</name>
    <name type="synonym">wri</name>
    <name type="ORF">DDB_G0291075</name>
</gene>
<dbReference type="EMBL" id="AF036170">
    <property type="protein sequence ID" value="AAB92245.1"/>
    <property type="molecule type" value="mRNA"/>
</dbReference>
<dbReference type="EMBL" id="AAFI02000175">
    <property type="protein sequence ID" value="EAL61885.1"/>
    <property type="molecule type" value="Genomic_DNA"/>
</dbReference>
<dbReference type="RefSeq" id="XP_635408.1">
    <property type="nucleotide sequence ID" value="XM_630316.1"/>
</dbReference>
<dbReference type="SMR" id="Q54F46"/>
<dbReference type="FunCoup" id="Q54F46">
    <property type="interactions" value="703"/>
</dbReference>
<dbReference type="STRING" id="44689.Q54F46"/>
<dbReference type="PaxDb" id="44689-DDB0191441"/>
<dbReference type="EnsemblProtists" id="EAL61885">
    <property type="protein sequence ID" value="EAL61885"/>
    <property type="gene ID" value="DDB_G0291075"/>
</dbReference>
<dbReference type="GeneID" id="8627992"/>
<dbReference type="KEGG" id="ddi:DDB_G0291075"/>
<dbReference type="dictyBase" id="DDB_G0291075">
    <property type="gene designation" value="warA"/>
</dbReference>
<dbReference type="VEuPathDB" id="AmoebaDB:DDB_G0291075"/>
<dbReference type="eggNOG" id="KOG0490">
    <property type="taxonomic scope" value="Eukaryota"/>
</dbReference>
<dbReference type="eggNOG" id="KOG4177">
    <property type="taxonomic scope" value="Eukaryota"/>
</dbReference>
<dbReference type="HOGENOM" id="CLU_350738_0_0_1"/>
<dbReference type="InParanoid" id="Q54F46"/>
<dbReference type="OMA" id="ASIWNRI"/>
<dbReference type="Reactome" id="R-DDI-8951664">
    <property type="pathway name" value="Neddylation"/>
</dbReference>
<dbReference type="Reactome" id="R-DDI-983168">
    <property type="pathway name" value="Antigen processing: Ubiquitination &amp; Proteasome degradation"/>
</dbReference>
<dbReference type="PRO" id="PR:Q54F46"/>
<dbReference type="Proteomes" id="UP000002195">
    <property type="component" value="Chromosome 5"/>
</dbReference>
<dbReference type="GO" id="GO:0005634">
    <property type="term" value="C:nucleus"/>
    <property type="evidence" value="ECO:0007669"/>
    <property type="project" value="UniProtKB-SubCell"/>
</dbReference>
<dbReference type="GO" id="GO:0003677">
    <property type="term" value="F:DNA binding"/>
    <property type="evidence" value="ECO:0007669"/>
    <property type="project" value="UniProtKB-KW"/>
</dbReference>
<dbReference type="GO" id="GO:0000981">
    <property type="term" value="F:DNA-binding transcription factor activity, RNA polymerase II-specific"/>
    <property type="evidence" value="ECO:0007669"/>
    <property type="project" value="InterPro"/>
</dbReference>
<dbReference type="GO" id="GO:0009653">
    <property type="term" value="P:anatomical structure morphogenesis"/>
    <property type="evidence" value="ECO:0000315"/>
    <property type="project" value="dictyBase"/>
</dbReference>
<dbReference type="GO" id="GO:0031286">
    <property type="term" value="P:negative regulation of sorocarp stalk cell differentiation"/>
    <property type="evidence" value="ECO:0000315"/>
    <property type="project" value="dictyBase"/>
</dbReference>
<dbReference type="GO" id="GO:1902351">
    <property type="term" value="P:response to imidacloprid"/>
    <property type="evidence" value="ECO:0000270"/>
    <property type="project" value="dictyBase"/>
</dbReference>
<dbReference type="CDD" id="cd00086">
    <property type="entry name" value="homeodomain"/>
    <property type="match status" value="1"/>
</dbReference>
<dbReference type="FunFam" id="1.10.10.60:FF:000889">
    <property type="match status" value="1"/>
</dbReference>
<dbReference type="Gene3D" id="1.25.40.20">
    <property type="entry name" value="Ankyrin repeat-containing domain"/>
    <property type="match status" value="2"/>
</dbReference>
<dbReference type="Gene3D" id="1.10.10.60">
    <property type="entry name" value="Homeodomain-like"/>
    <property type="match status" value="1"/>
</dbReference>
<dbReference type="InterPro" id="IPR002110">
    <property type="entry name" value="Ankyrin_rpt"/>
</dbReference>
<dbReference type="InterPro" id="IPR036770">
    <property type="entry name" value="Ankyrin_rpt-contain_sf"/>
</dbReference>
<dbReference type="InterPro" id="IPR001356">
    <property type="entry name" value="HD"/>
</dbReference>
<dbReference type="InterPro" id="IPR017970">
    <property type="entry name" value="Homeobox_CS"/>
</dbReference>
<dbReference type="InterPro" id="IPR009057">
    <property type="entry name" value="Homeodomain-like_sf"/>
</dbReference>
<dbReference type="PANTHER" id="PTHR24198">
    <property type="entry name" value="ANKYRIN REPEAT AND PROTEIN KINASE DOMAIN-CONTAINING PROTEIN"/>
    <property type="match status" value="1"/>
</dbReference>
<dbReference type="PANTHER" id="PTHR24198:SF165">
    <property type="entry name" value="ANKYRIN REPEAT-CONTAINING PROTEIN-RELATED"/>
    <property type="match status" value="1"/>
</dbReference>
<dbReference type="Pfam" id="PF00023">
    <property type="entry name" value="Ank"/>
    <property type="match status" value="1"/>
</dbReference>
<dbReference type="Pfam" id="PF12796">
    <property type="entry name" value="Ank_2"/>
    <property type="match status" value="2"/>
</dbReference>
<dbReference type="Pfam" id="PF13637">
    <property type="entry name" value="Ank_4"/>
    <property type="match status" value="1"/>
</dbReference>
<dbReference type="Pfam" id="PF00046">
    <property type="entry name" value="Homeodomain"/>
    <property type="match status" value="1"/>
</dbReference>
<dbReference type="PRINTS" id="PR01415">
    <property type="entry name" value="ANKYRIN"/>
</dbReference>
<dbReference type="SMART" id="SM00248">
    <property type="entry name" value="ANK"/>
    <property type="match status" value="8"/>
</dbReference>
<dbReference type="SMART" id="SM00389">
    <property type="entry name" value="HOX"/>
    <property type="match status" value="1"/>
</dbReference>
<dbReference type="SUPFAM" id="SSF48403">
    <property type="entry name" value="Ankyrin repeat"/>
    <property type="match status" value="1"/>
</dbReference>
<dbReference type="SUPFAM" id="SSF46689">
    <property type="entry name" value="Homeodomain-like"/>
    <property type="match status" value="1"/>
</dbReference>
<dbReference type="PROSITE" id="PS50297">
    <property type="entry name" value="ANK_REP_REGION"/>
    <property type="match status" value="1"/>
</dbReference>
<dbReference type="PROSITE" id="PS50088">
    <property type="entry name" value="ANK_REPEAT"/>
    <property type="match status" value="8"/>
</dbReference>
<dbReference type="PROSITE" id="PS00027">
    <property type="entry name" value="HOMEOBOX_1"/>
    <property type="match status" value="1"/>
</dbReference>
<dbReference type="PROSITE" id="PS50071">
    <property type="entry name" value="HOMEOBOX_2"/>
    <property type="match status" value="1"/>
</dbReference>
<sequence length="803" mass="88800">MASIVMKSQHSLGYPNIGNINRSDYDSYEQQYNNPTGSKQYNNNNNNNTNTNEINNGTNTNLNPNNMYGMYNNNNNNNNNNNNNNNNNNNNNNSNNNNNNNNNNNINNNNNNNNNNNNNNNNNNQHLSQSQQLSPTPYSSNSFSKLLSRSTNDLMLDQDDPSKKKRKRTSPDQLKLLEKIFMAHQHPNLNLRSQLAVELHMTARSVQIWFQNRRAKARNMEFKPQLSHGGSDLIYNALGSQNGMNSMGGGGGNGGGNGGGGMNGINNILNGNHNRNLNKYIPHGGNSINGNMGGGGGGGGGSHNHHHHNHNHNHHNHNHNHNHNQPLSNGDCGEKFSVASAWNKILLHPNNIDFLIRYNPDDPNSIDVNARDSKGLSLLFTAAFLGYEYQVRRLIESGANPNIKDNQGNTPLIAASVLGNQPIVELLLEHRADPNLVNDEGVSPLFSACKGGHLQIASSLLDHDAEVSVKTKINGETPLHIASLKGFEKICKLLIETEAKASVIDSNNRTPLHHACIMGYFSIAKLLICNGADMNAIDIDGHTPLHTSSLMGHDLITRLLLENGADPNIQDSEGYTPIHYAVRESRIETVKFLIKFNSKLNIKTKNGQNLIHLSVQFASLMMGQMIFESKGCEIAADDSDDQGYTPLYLAAKAGKTNFVKYLLSKGASKKIALEKLIQENQDKEIIQMLESTVTKSSNNNNSNSNINNINNINNINNINSQPNTNSDNNNNNNNNNFNENYSNGNNEQSQPPGNKFEEDDEDDFYDRVYKKSYTNRIISNSFSYQQKLNSGNGISVNSGNLED</sequence>
<protein>
    <recommendedName>
        <fullName>Homeobox protein Wariai</fullName>
    </recommendedName>
    <alternativeName>
        <fullName>Homeobox protein 1</fullName>
        <shortName>DdHbx-1</shortName>
    </alternativeName>
</protein>
<organism>
    <name type="scientific">Dictyostelium discoideum</name>
    <name type="common">Social amoeba</name>
    <dbReference type="NCBI Taxonomy" id="44689"/>
    <lineage>
        <taxon>Eukaryota</taxon>
        <taxon>Amoebozoa</taxon>
        <taxon>Evosea</taxon>
        <taxon>Eumycetozoa</taxon>
        <taxon>Dictyostelia</taxon>
        <taxon>Dictyosteliales</taxon>
        <taxon>Dictyosteliaceae</taxon>
        <taxon>Dictyostelium</taxon>
    </lineage>
</organism>
<comment type="function">
    <text evidence="3">Putative transcription factor, that seems to be involved in anterior-posterior patterning of the slug, probably by controlling the proportions of prestalk and prespore cells.</text>
</comment>
<comment type="subcellular location">
    <subcellularLocation>
        <location evidence="1">Nucleus</location>
    </subcellularLocation>
</comment>
<comment type="developmental stage">
    <text evidence="3">Specifically expressed in pstA cells. Expression is not detected in pstO or prespore cells.</text>
</comment>
<comment type="disruption phenotype">
    <text evidence="3">Cells show an approximately 2.5-fold increase in the number of pstO cells and the size of the pstO domain and a concomitant decrease in prespore cells and the size of the prespore domain.</text>
</comment>
<comment type="miscellaneous">
    <text>'Wariai' means 'proportioning' or 'ratio' in Japanese.</text>
</comment>
<feature type="chain" id="PRO_0000328098" description="Homeobox protein Wariai">
    <location>
        <begin position="1"/>
        <end position="803"/>
    </location>
</feature>
<feature type="repeat" description="ANK 1">
    <location>
        <begin position="374"/>
        <end position="403"/>
    </location>
</feature>
<feature type="repeat" description="ANK 2">
    <location>
        <begin position="407"/>
        <end position="436"/>
    </location>
</feature>
<feature type="repeat" description="ANK 3">
    <location>
        <begin position="440"/>
        <end position="469"/>
    </location>
</feature>
<feature type="repeat" description="ANK 4">
    <location>
        <begin position="474"/>
        <end position="503"/>
    </location>
</feature>
<feature type="repeat" description="ANK 5">
    <location>
        <begin position="507"/>
        <end position="536"/>
    </location>
</feature>
<feature type="repeat" description="ANK 6">
    <location>
        <begin position="540"/>
        <end position="569"/>
    </location>
</feature>
<feature type="repeat" description="ANK 7">
    <location>
        <begin position="573"/>
        <end position="602"/>
    </location>
</feature>
<feature type="repeat" description="ANK 8">
    <location>
        <begin position="606"/>
        <end position="636"/>
    </location>
</feature>
<feature type="repeat" description="ANK 9">
    <location>
        <begin position="642"/>
        <end position="671"/>
    </location>
</feature>
<feature type="DNA-binding region" description="Homeobox" evidence="1">
    <location>
        <begin position="162"/>
        <end position="221"/>
    </location>
</feature>
<feature type="region of interest" description="Disordered" evidence="2">
    <location>
        <begin position="23"/>
        <end position="144"/>
    </location>
</feature>
<feature type="region of interest" description="Disordered" evidence="2">
    <location>
        <begin position="288"/>
        <end position="330"/>
    </location>
</feature>
<feature type="region of interest" description="Disordered" evidence="2">
    <location>
        <begin position="695"/>
        <end position="760"/>
    </location>
</feature>
<feature type="compositionally biased region" description="Polar residues" evidence="2">
    <location>
        <begin position="23"/>
        <end position="41"/>
    </location>
</feature>
<feature type="compositionally biased region" description="Low complexity" evidence="2">
    <location>
        <begin position="42"/>
        <end position="124"/>
    </location>
</feature>
<feature type="compositionally biased region" description="Polar residues" evidence="2">
    <location>
        <begin position="125"/>
        <end position="138"/>
    </location>
</feature>
<feature type="compositionally biased region" description="Gly residues" evidence="2">
    <location>
        <begin position="291"/>
        <end position="302"/>
    </location>
</feature>
<feature type="compositionally biased region" description="Basic residues" evidence="2">
    <location>
        <begin position="303"/>
        <end position="322"/>
    </location>
</feature>
<feature type="compositionally biased region" description="Low complexity" evidence="2">
    <location>
        <begin position="696"/>
        <end position="746"/>
    </location>
</feature>
<feature type="sequence conflict" description="In Ref. 1; AAB92245." evidence="4" ref="1">
    <location>
        <begin position="305"/>
        <end position="307"/>
    </location>
</feature>
<feature type="sequence conflict" description="In Ref. 1; AAB92245." evidence="4" ref="1">
    <original>N</original>
    <variation>D</variation>
    <location>
        <position position="409"/>
    </location>
</feature>
<feature type="sequence conflict" description="In Ref. 1; AAB92245." evidence="4" ref="1">
    <original>A</original>
    <variation>R</variation>
    <location>
        <position position="465"/>
    </location>
</feature>
<feature type="sequence conflict" description="In Ref. 1; AAB92245." evidence="4" ref="1">
    <original>HD</original>
    <variation>QY</variation>
    <location>
        <begin position="553"/>
        <end position="554"/>
    </location>
</feature>
<feature type="sequence conflict" description="In Ref. 1; AAB92245." evidence="4" ref="1">
    <original>A</original>
    <variation>R</variation>
    <location>
        <position position="667"/>
    </location>
</feature>
<feature type="sequence conflict" description="In Ref. 1; AAB92245." evidence="4" ref="1">
    <original>A</original>
    <variation>R</variation>
    <location>
        <position position="672"/>
    </location>
</feature>
<name>WARA_DICDI</name>
<proteinExistence type="evidence at transcript level"/>
<evidence type="ECO:0000255" key="1">
    <source>
        <dbReference type="PROSITE-ProRule" id="PRU00108"/>
    </source>
</evidence>
<evidence type="ECO:0000256" key="2">
    <source>
        <dbReference type="SAM" id="MobiDB-lite"/>
    </source>
</evidence>
<evidence type="ECO:0000269" key="3">
    <source>
    </source>
</evidence>
<evidence type="ECO:0000305" key="4"/>
<keyword id="KW-0040">ANK repeat</keyword>
<keyword id="KW-0217">Developmental protein</keyword>
<keyword id="KW-0238">DNA-binding</keyword>
<keyword id="KW-0371">Homeobox</keyword>
<keyword id="KW-0539">Nucleus</keyword>
<keyword id="KW-1185">Reference proteome</keyword>
<keyword id="KW-0677">Repeat</keyword>
<keyword id="KW-0804">Transcription</keyword>
<keyword id="KW-0805">Transcription regulation</keyword>